<keyword id="KW-0195">Cyclin</keyword>
<keyword id="KW-1185">Reference proteome</keyword>
<keyword id="KW-0804">Transcription</keyword>
<keyword id="KW-0805">Transcription regulation</keyword>
<organism>
    <name type="scientific">Caenorhabditis elegans</name>
    <dbReference type="NCBI Taxonomy" id="6239"/>
    <lineage>
        <taxon>Eukaryota</taxon>
        <taxon>Metazoa</taxon>
        <taxon>Ecdysozoa</taxon>
        <taxon>Nematoda</taxon>
        <taxon>Chromadorea</taxon>
        <taxon>Rhabditida</taxon>
        <taxon>Rhabditina</taxon>
        <taxon>Rhabditomorpha</taxon>
        <taxon>Rhabditoidea</taxon>
        <taxon>Rhabditidae</taxon>
        <taxon>Peloderinae</taxon>
        <taxon>Caenorhabditis</taxon>
    </lineage>
</organism>
<dbReference type="EMBL" id="FO080400">
    <property type="protein sequence ID" value="CCD63445.1"/>
    <property type="molecule type" value="Genomic_DNA"/>
</dbReference>
<dbReference type="EMBL" id="FO080400">
    <property type="protein sequence ID" value="CCD63446.1"/>
    <property type="molecule type" value="Genomic_DNA"/>
</dbReference>
<dbReference type="EMBL" id="FO080400">
    <property type="protein sequence ID" value="CCD63447.1"/>
    <property type="molecule type" value="Genomic_DNA"/>
</dbReference>
<dbReference type="PIR" id="S44815">
    <property type="entry name" value="S44815"/>
</dbReference>
<dbReference type="RefSeq" id="NP_498744.1">
    <property type="nucleotide sequence ID" value="NM_066343.4"/>
</dbReference>
<dbReference type="RefSeq" id="NP_871656.1">
    <property type="nucleotide sequence ID" value="NM_181927.3"/>
</dbReference>
<dbReference type="RefSeq" id="NP_871657.1">
    <property type="nucleotide sequence ID" value="NM_181928.5"/>
</dbReference>
<dbReference type="SMR" id="P34425"/>
<dbReference type="BioGRID" id="41331">
    <property type="interactions" value="4"/>
</dbReference>
<dbReference type="FunCoup" id="P34425">
    <property type="interactions" value="165"/>
</dbReference>
<dbReference type="STRING" id="6239.F44B9.4a.1"/>
<dbReference type="iPTMnet" id="P34425"/>
<dbReference type="PaxDb" id="6239-F44B9.4a"/>
<dbReference type="PeptideAtlas" id="P34425"/>
<dbReference type="GeneID" id="176125"/>
<dbReference type="AGR" id="WB:WBGene00000507"/>
<dbReference type="WormBase" id="F44B9.4a">
    <property type="protein sequence ID" value="CE00173"/>
    <property type="gene ID" value="WBGene00000507"/>
    <property type="gene designation" value="cit-1.1"/>
</dbReference>
<dbReference type="eggNOG" id="KOG0834">
    <property type="taxonomic scope" value="Eukaryota"/>
</dbReference>
<dbReference type="GeneTree" id="ENSGT00970000196489"/>
<dbReference type="HOGENOM" id="CLU_555800_0_0_1"/>
<dbReference type="InParanoid" id="P34425"/>
<dbReference type="OMA" id="MADEFTQ"/>
<dbReference type="OrthoDB" id="25002at2759"/>
<dbReference type="PhylomeDB" id="P34425"/>
<dbReference type="Reactome" id="R-CEL-112382">
    <property type="pathway name" value="Formation of RNA Pol II elongation complex"/>
</dbReference>
<dbReference type="Reactome" id="R-CEL-2173796">
    <property type="pathway name" value="SMAD2/SMAD3:SMAD4 heterotrimer regulates transcription"/>
</dbReference>
<dbReference type="Reactome" id="R-CEL-674695">
    <property type="pathway name" value="RNA Polymerase II Pre-transcription Events"/>
</dbReference>
<dbReference type="Reactome" id="R-CEL-6796648">
    <property type="pathway name" value="TP53 Regulates Transcription of DNA Repair Genes"/>
</dbReference>
<dbReference type="Reactome" id="R-CEL-6807505">
    <property type="pathway name" value="RNA polymerase II transcribes snRNA genes"/>
</dbReference>
<dbReference type="Reactome" id="R-CEL-75955">
    <property type="pathway name" value="RNA Polymerase II Transcription Elongation"/>
</dbReference>
<dbReference type="Reactome" id="R-CEL-9018519">
    <property type="pathway name" value="Estrogen-dependent gene expression"/>
</dbReference>
<dbReference type="PRO" id="PR:P34425"/>
<dbReference type="Proteomes" id="UP000001940">
    <property type="component" value="Chromosome III"/>
</dbReference>
<dbReference type="Bgee" id="WBGene00000507">
    <property type="expression patterns" value="Expressed in adult organism and 4 other cell types or tissues"/>
</dbReference>
<dbReference type="GO" id="GO:0008024">
    <property type="term" value="C:cyclin/CDK positive transcription elongation factor complex"/>
    <property type="evidence" value="ECO:0000318"/>
    <property type="project" value="GO_Central"/>
</dbReference>
<dbReference type="GO" id="GO:0005634">
    <property type="term" value="C:nucleus"/>
    <property type="evidence" value="ECO:0000318"/>
    <property type="project" value="GO_Central"/>
</dbReference>
<dbReference type="GO" id="GO:0061575">
    <property type="term" value="F:cyclin-dependent protein serine/threonine kinase activator activity"/>
    <property type="evidence" value="ECO:0000318"/>
    <property type="project" value="GO_Central"/>
</dbReference>
<dbReference type="GO" id="GO:0032786">
    <property type="term" value="P:positive regulation of DNA-templated transcription, elongation"/>
    <property type="evidence" value="ECO:0000318"/>
    <property type="project" value="GO_Central"/>
</dbReference>
<dbReference type="GO" id="GO:0045944">
    <property type="term" value="P:positive regulation of transcription by RNA polymerase II"/>
    <property type="evidence" value="ECO:0000318"/>
    <property type="project" value="GO_Central"/>
</dbReference>
<dbReference type="CDD" id="cd20539">
    <property type="entry name" value="CYCLIN_CCNT_rpt2"/>
    <property type="match status" value="1"/>
</dbReference>
<dbReference type="FunFam" id="1.10.472.10:FF:000181">
    <property type="entry name" value="Protein CBR-CIT-1.1"/>
    <property type="match status" value="1"/>
</dbReference>
<dbReference type="Gene3D" id="1.10.472.10">
    <property type="entry name" value="Cyclin-like"/>
    <property type="match status" value="2"/>
</dbReference>
<dbReference type="InterPro" id="IPR036915">
    <property type="entry name" value="Cyclin-like_sf"/>
</dbReference>
<dbReference type="InterPro" id="IPR043198">
    <property type="entry name" value="Cyclin/Ssn8"/>
</dbReference>
<dbReference type="InterPro" id="IPR006671">
    <property type="entry name" value="Cyclin_N"/>
</dbReference>
<dbReference type="PANTHER" id="PTHR10026">
    <property type="entry name" value="CYCLIN"/>
    <property type="match status" value="1"/>
</dbReference>
<dbReference type="Pfam" id="PF00134">
    <property type="entry name" value="Cyclin_N"/>
    <property type="match status" value="1"/>
</dbReference>
<dbReference type="Pfam" id="PF21797">
    <property type="entry name" value="CycT2-like_C"/>
    <property type="match status" value="1"/>
</dbReference>
<dbReference type="SUPFAM" id="SSF47954">
    <property type="entry name" value="Cyclin-like"/>
    <property type="match status" value="2"/>
</dbReference>
<reference key="1">
    <citation type="journal article" date="1994" name="Nature">
        <title>2.2 Mb of contiguous nucleotide sequence from chromosome III of C. elegans.</title>
        <authorList>
            <person name="Wilson R."/>
            <person name="Ainscough R."/>
            <person name="Anderson K."/>
            <person name="Baynes C."/>
            <person name="Berks M."/>
            <person name="Bonfield J."/>
            <person name="Burton J."/>
            <person name="Connell M."/>
            <person name="Copsey T."/>
            <person name="Cooper J."/>
            <person name="Coulson A."/>
            <person name="Craxton M."/>
            <person name="Dear S."/>
            <person name="Du Z."/>
            <person name="Durbin R."/>
            <person name="Favello A."/>
            <person name="Fraser A."/>
            <person name="Fulton L."/>
            <person name="Gardner A."/>
            <person name="Green P."/>
            <person name="Hawkins T."/>
            <person name="Hillier L."/>
            <person name="Jier M."/>
            <person name="Johnston L."/>
            <person name="Jones M."/>
            <person name="Kershaw J."/>
            <person name="Kirsten J."/>
            <person name="Laisster N."/>
            <person name="Latreille P."/>
            <person name="Lightning J."/>
            <person name="Lloyd C."/>
            <person name="Mortimore B."/>
            <person name="O'Callaghan M."/>
            <person name="Parsons J."/>
            <person name="Percy C."/>
            <person name="Rifken L."/>
            <person name="Roopra A."/>
            <person name="Saunders D."/>
            <person name="Shownkeen R."/>
            <person name="Sims M."/>
            <person name="Smaldon N."/>
            <person name="Smith A."/>
            <person name="Smith M."/>
            <person name="Sonnhammer E."/>
            <person name="Staden R."/>
            <person name="Sulston J."/>
            <person name="Thierry-Mieg J."/>
            <person name="Thomas K."/>
            <person name="Vaudin M."/>
            <person name="Vaughan K."/>
            <person name="Waterston R."/>
            <person name="Watson A."/>
            <person name="Weinstock L."/>
            <person name="Wilkinson-Sproat J."/>
            <person name="Wohldman P."/>
        </authorList>
    </citation>
    <scope>NUCLEOTIDE SEQUENCE [LARGE SCALE GENOMIC DNA]</scope>
    <source>
        <strain>Bristol N2</strain>
    </source>
</reference>
<reference key="2">
    <citation type="journal article" date="1998" name="Science">
        <title>Genome sequence of the nematode C. elegans: a platform for investigating biology.</title>
        <authorList>
            <consortium name="The C. elegans sequencing consortium"/>
        </authorList>
    </citation>
    <scope>NUCLEOTIDE SEQUENCE [LARGE SCALE GENOMIC DNA]</scope>
    <scope>ALTERNATIVE SPLICING</scope>
    <source>
        <strain>Bristol N2</strain>
    </source>
</reference>
<protein>
    <recommendedName>
        <fullName>Cyclin-T1.1</fullName>
    </recommendedName>
</protein>
<feature type="chain" id="PRO_0000080496" description="Cyclin-T1.1">
    <location>
        <begin position="1"/>
        <end position="468"/>
    </location>
</feature>
<feature type="region of interest" description="Disordered" evidence="1">
    <location>
        <begin position="336"/>
        <end position="468"/>
    </location>
</feature>
<feature type="compositionally biased region" description="Basic and acidic residues" evidence="1">
    <location>
        <begin position="336"/>
        <end position="354"/>
    </location>
</feature>
<feature type="compositionally biased region" description="Pro residues" evidence="1">
    <location>
        <begin position="387"/>
        <end position="402"/>
    </location>
</feature>
<feature type="compositionally biased region" description="Acidic residues" evidence="1">
    <location>
        <begin position="458"/>
        <end position="468"/>
    </location>
</feature>
<name>CCNT1_CAEEL</name>
<gene>
    <name evidence="3" type="primary">cit-1.1</name>
    <name evidence="3" type="ORF">F44B9.4</name>
</gene>
<proteinExistence type="inferred from homology"/>
<sequence>MSVSSRGAASPAHRTAPTKWLFTKEEMKKTASIQEGMSREEELASRQMAAAFIQEMIDGLNNVKDPKMKIGHTGLCVAHTHMHRFYYLHSFKKYDYRDVGAACVFLAGKSQECPRKLSHVISVWRERKDRKQLTTETARNEAAQIIVLLESMILQTIAFDLNVHLPHIYVLDIMKKVDKKEHYRPLTSCAYYFATDVIAVTDWSLRYSAASMSIVIIHLMAAYANVRIERLFADFINEDSPWYAKFDETMTNEKLREMEVDFLVTYRNSCQFHHASKFNFREHRPMLENPDVRKLDRTRDARSHSPMVHHVPDSTVNVRPRAYVPRDELTVERLNKERGVEEERRKRERDRMAGKLDSSTSSEKRARIDPLANNFVSSSSSSNGKLAPPPIPPQLNFPPPPIVSSGYNHKNQINRKNHENNHTNSSVSPAFVPSARTFDVAPMLTPPTAPKLQSADNSDMDLEDGELE</sequence>
<accession>P34425</accession>
<accession>Q8IG21</accession>
<accession>Q8IG22</accession>
<evidence type="ECO:0000256" key="1">
    <source>
        <dbReference type="SAM" id="MobiDB-lite"/>
    </source>
</evidence>
<evidence type="ECO:0000305" key="2"/>
<evidence type="ECO:0000312" key="3">
    <source>
        <dbReference type="WormBase" id="F44B9.4a"/>
    </source>
</evidence>
<comment type="function">
    <text>Regulatory subunit of the cyclin-dependent kinase pair (CDK9/cyclin T) complex, also called positive transcription elongation factor B (P-TEFb), which is proposed to facilitate the transition from abortive to production elongation by phosphorylating the CTD (carboxy-terminal domain) of the large subunit of RNA polymerase II (RNAP II).</text>
</comment>
<comment type="similarity">
    <text evidence="2">Belongs to the cyclin family. Cyclin C subfamily.</text>
</comment>